<organism>
    <name type="scientific">Porphyromonas gingivalis (strain ATCC 33277 / DSM 20709 / CIP 103683 / JCM 12257 / NCTC 11834 / 2561)</name>
    <dbReference type="NCBI Taxonomy" id="431947"/>
    <lineage>
        <taxon>Bacteria</taxon>
        <taxon>Pseudomonadati</taxon>
        <taxon>Bacteroidota</taxon>
        <taxon>Bacteroidia</taxon>
        <taxon>Bacteroidales</taxon>
        <taxon>Porphyromonadaceae</taxon>
        <taxon>Porphyromonas</taxon>
    </lineage>
</organism>
<sequence length="220" mass="23890">MKFFIDTANLDQIREANDMGVLDGVTTNPSLMAKEGISGKDNCMRHYLAICEIVDGDVSAEVIATDYEGMIREGEELAALHPQIVVKVPCTAEGIKAIKYFSDKGIRTNCTLIFTVGQALLAAKAGASYVSPFVGRLDDIASDGIKLVENIVAMFGFYRYETEVLAASIRHTQHIIQCLEAGADVATCPLNAIKGLLKHPLTDSGLKAFLEDHRRVNEGK</sequence>
<keyword id="KW-0963">Cytoplasm</keyword>
<keyword id="KW-0570">Pentose shunt</keyword>
<keyword id="KW-0704">Schiff base</keyword>
<keyword id="KW-0808">Transferase</keyword>
<protein>
    <recommendedName>
        <fullName evidence="1">Probable transaldolase</fullName>
        <ecNumber evidence="1">2.2.1.2</ecNumber>
    </recommendedName>
</protein>
<name>TAL_PORG3</name>
<comment type="function">
    <text evidence="1">Transaldolase is important for the balance of metabolites in the pentose-phosphate pathway.</text>
</comment>
<comment type="catalytic activity">
    <reaction evidence="1">
        <text>D-sedoheptulose 7-phosphate + D-glyceraldehyde 3-phosphate = D-erythrose 4-phosphate + beta-D-fructose 6-phosphate</text>
        <dbReference type="Rhea" id="RHEA:17053"/>
        <dbReference type="ChEBI" id="CHEBI:16897"/>
        <dbReference type="ChEBI" id="CHEBI:57483"/>
        <dbReference type="ChEBI" id="CHEBI:57634"/>
        <dbReference type="ChEBI" id="CHEBI:59776"/>
        <dbReference type="EC" id="2.2.1.2"/>
    </reaction>
</comment>
<comment type="pathway">
    <text evidence="1">Carbohydrate degradation; pentose phosphate pathway; D-glyceraldehyde 3-phosphate and beta-D-fructose 6-phosphate from D-ribose 5-phosphate and D-xylulose 5-phosphate (non-oxidative stage): step 2/3.</text>
</comment>
<comment type="subcellular location">
    <subcellularLocation>
        <location evidence="1">Cytoplasm</location>
    </subcellularLocation>
</comment>
<comment type="similarity">
    <text evidence="1">Belongs to the transaldolase family. Type 3B subfamily.</text>
</comment>
<gene>
    <name evidence="1" type="primary">tal</name>
    <name type="ordered locus">PGN_0333</name>
</gene>
<reference key="1">
    <citation type="journal article" date="2008" name="DNA Res.">
        <title>Determination of the genome sequence of Porphyromonas gingivalis strain ATCC 33277 and genomic comparison with strain W83 revealed extensive genome rearrangements in P. gingivalis.</title>
        <authorList>
            <person name="Naito M."/>
            <person name="Hirakawa H."/>
            <person name="Yamashita A."/>
            <person name="Ohara N."/>
            <person name="Shoji M."/>
            <person name="Yukitake H."/>
            <person name="Nakayama K."/>
            <person name="Toh H."/>
            <person name="Yoshimura F."/>
            <person name="Kuhara S."/>
            <person name="Hattori M."/>
            <person name="Hayashi T."/>
            <person name="Nakayama K."/>
        </authorList>
    </citation>
    <scope>NUCLEOTIDE SEQUENCE [LARGE SCALE GENOMIC DNA]</scope>
    <source>
        <strain>ATCC 33277 / DSM 20709 / CIP 103683 / JCM 12257 / NCTC 11834 / 2561</strain>
    </source>
</reference>
<proteinExistence type="inferred from homology"/>
<evidence type="ECO:0000255" key="1">
    <source>
        <dbReference type="HAMAP-Rule" id="MF_00494"/>
    </source>
</evidence>
<feature type="chain" id="PRO_1000126344" description="Probable transaldolase">
    <location>
        <begin position="1"/>
        <end position="220"/>
    </location>
</feature>
<feature type="active site" description="Schiff-base intermediate with substrate" evidence="1">
    <location>
        <position position="87"/>
    </location>
</feature>
<dbReference type="EC" id="2.2.1.2" evidence="1"/>
<dbReference type="EMBL" id="AP009380">
    <property type="protein sequence ID" value="BAG32852.1"/>
    <property type="molecule type" value="Genomic_DNA"/>
</dbReference>
<dbReference type="SMR" id="B2RHK7"/>
<dbReference type="GeneID" id="29255578"/>
<dbReference type="KEGG" id="pgn:PGN_0333"/>
<dbReference type="eggNOG" id="COG0176">
    <property type="taxonomic scope" value="Bacteria"/>
</dbReference>
<dbReference type="HOGENOM" id="CLU_079764_0_0_10"/>
<dbReference type="OrthoDB" id="9807051at2"/>
<dbReference type="BioCyc" id="PGIN431947:G1G2V-365-MONOMER"/>
<dbReference type="UniPathway" id="UPA00115">
    <property type="reaction ID" value="UER00414"/>
</dbReference>
<dbReference type="Proteomes" id="UP000008842">
    <property type="component" value="Chromosome"/>
</dbReference>
<dbReference type="GO" id="GO:0005737">
    <property type="term" value="C:cytoplasm"/>
    <property type="evidence" value="ECO:0007669"/>
    <property type="project" value="UniProtKB-SubCell"/>
</dbReference>
<dbReference type="GO" id="GO:0016832">
    <property type="term" value="F:aldehyde-lyase activity"/>
    <property type="evidence" value="ECO:0007669"/>
    <property type="project" value="InterPro"/>
</dbReference>
<dbReference type="GO" id="GO:0004801">
    <property type="term" value="F:transaldolase activity"/>
    <property type="evidence" value="ECO:0007669"/>
    <property type="project" value="UniProtKB-UniRule"/>
</dbReference>
<dbReference type="GO" id="GO:0005975">
    <property type="term" value="P:carbohydrate metabolic process"/>
    <property type="evidence" value="ECO:0007669"/>
    <property type="project" value="InterPro"/>
</dbReference>
<dbReference type="GO" id="GO:0006098">
    <property type="term" value="P:pentose-phosphate shunt"/>
    <property type="evidence" value="ECO:0007669"/>
    <property type="project" value="UniProtKB-UniRule"/>
</dbReference>
<dbReference type="CDD" id="cd00956">
    <property type="entry name" value="Transaldolase_FSA"/>
    <property type="match status" value="1"/>
</dbReference>
<dbReference type="FunFam" id="3.20.20.70:FF:000018">
    <property type="entry name" value="Probable transaldolase"/>
    <property type="match status" value="1"/>
</dbReference>
<dbReference type="Gene3D" id="3.20.20.70">
    <property type="entry name" value="Aldolase class I"/>
    <property type="match status" value="1"/>
</dbReference>
<dbReference type="HAMAP" id="MF_00494">
    <property type="entry name" value="Transaldolase_3b"/>
    <property type="match status" value="1"/>
</dbReference>
<dbReference type="InterPro" id="IPR013785">
    <property type="entry name" value="Aldolase_TIM"/>
</dbReference>
<dbReference type="InterPro" id="IPR001585">
    <property type="entry name" value="TAL/FSA"/>
</dbReference>
<dbReference type="InterPro" id="IPR022999">
    <property type="entry name" value="Transaldolase_3B"/>
</dbReference>
<dbReference type="InterPro" id="IPR004731">
    <property type="entry name" value="Transaldolase_3B/F6P_aldolase"/>
</dbReference>
<dbReference type="InterPro" id="IPR018225">
    <property type="entry name" value="Transaldolase_AS"/>
</dbReference>
<dbReference type="InterPro" id="IPR033919">
    <property type="entry name" value="TSA/FSA_arc/bac"/>
</dbReference>
<dbReference type="NCBIfam" id="TIGR00875">
    <property type="entry name" value="fsa_talC_mipB"/>
    <property type="match status" value="1"/>
</dbReference>
<dbReference type="PANTHER" id="PTHR10683:SF40">
    <property type="entry name" value="FRUCTOSE-6-PHOSPHATE ALDOLASE 1-RELATED"/>
    <property type="match status" value="1"/>
</dbReference>
<dbReference type="PANTHER" id="PTHR10683">
    <property type="entry name" value="TRANSALDOLASE"/>
    <property type="match status" value="1"/>
</dbReference>
<dbReference type="Pfam" id="PF00923">
    <property type="entry name" value="TAL_FSA"/>
    <property type="match status" value="1"/>
</dbReference>
<dbReference type="SUPFAM" id="SSF51569">
    <property type="entry name" value="Aldolase"/>
    <property type="match status" value="1"/>
</dbReference>
<dbReference type="PROSITE" id="PS01054">
    <property type="entry name" value="TRANSALDOLASE_1"/>
    <property type="match status" value="1"/>
</dbReference>
<dbReference type="PROSITE" id="PS00958">
    <property type="entry name" value="TRANSALDOLASE_2"/>
    <property type="match status" value="1"/>
</dbReference>
<accession>B2RHK7</accession>